<keyword id="KW-0143">Chaperone</keyword>
<keyword id="KW-0963">Cytoplasm</keyword>
<keyword id="KW-1185">Reference proteome</keyword>
<keyword id="KW-0690">Ribosome biogenesis</keyword>
<keyword id="KW-0698">rRNA processing</keyword>
<protein>
    <recommendedName>
        <fullName evidence="1">Ribosome maturation factor RimM</fullName>
    </recommendedName>
</protein>
<name>RIMM_LEUCK</name>
<dbReference type="EMBL" id="DQ489736">
    <property type="protein sequence ID" value="ACA83037.1"/>
    <property type="molecule type" value="Genomic_DNA"/>
</dbReference>
<dbReference type="RefSeq" id="WP_012305344.1">
    <property type="nucleotide sequence ID" value="NC_010471.1"/>
</dbReference>
<dbReference type="SMR" id="B1MZT5"/>
<dbReference type="STRING" id="349519.LCK_01210"/>
<dbReference type="KEGG" id="lci:LCK_01210"/>
<dbReference type="eggNOG" id="COG0806">
    <property type="taxonomic scope" value="Bacteria"/>
</dbReference>
<dbReference type="HOGENOM" id="CLU_077636_3_1_9"/>
<dbReference type="OrthoDB" id="9810331at2"/>
<dbReference type="Proteomes" id="UP000002166">
    <property type="component" value="Chromosome"/>
</dbReference>
<dbReference type="GO" id="GO:0005737">
    <property type="term" value="C:cytoplasm"/>
    <property type="evidence" value="ECO:0007669"/>
    <property type="project" value="UniProtKB-SubCell"/>
</dbReference>
<dbReference type="GO" id="GO:0005840">
    <property type="term" value="C:ribosome"/>
    <property type="evidence" value="ECO:0007669"/>
    <property type="project" value="InterPro"/>
</dbReference>
<dbReference type="GO" id="GO:0043022">
    <property type="term" value="F:ribosome binding"/>
    <property type="evidence" value="ECO:0007669"/>
    <property type="project" value="InterPro"/>
</dbReference>
<dbReference type="GO" id="GO:0042274">
    <property type="term" value="P:ribosomal small subunit biogenesis"/>
    <property type="evidence" value="ECO:0007669"/>
    <property type="project" value="UniProtKB-UniRule"/>
</dbReference>
<dbReference type="GO" id="GO:0006364">
    <property type="term" value="P:rRNA processing"/>
    <property type="evidence" value="ECO:0007669"/>
    <property type="project" value="UniProtKB-UniRule"/>
</dbReference>
<dbReference type="Gene3D" id="2.30.30.240">
    <property type="entry name" value="PRC-barrel domain"/>
    <property type="match status" value="1"/>
</dbReference>
<dbReference type="Gene3D" id="2.40.30.60">
    <property type="entry name" value="RimM"/>
    <property type="match status" value="1"/>
</dbReference>
<dbReference type="HAMAP" id="MF_00014">
    <property type="entry name" value="Ribosome_mat_RimM"/>
    <property type="match status" value="1"/>
</dbReference>
<dbReference type="InterPro" id="IPR027275">
    <property type="entry name" value="PRC-brl_dom"/>
</dbReference>
<dbReference type="InterPro" id="IPR011033">
    <property type="entry name" value="PRC_barrel-like_sf"/>
</dbReference>
<dbReference type="InterPro" id="IPR011961">
    <property type="entry name" value="RimM"/>
</dbReference>
<dbReference type="InterPro" id="IPR002676">
    <property type="entry name" value="RimM_N"/>
</dbReference>
<dbReference type="InterPro" id="IPR036976">
    <property type="entry name" value="RimM_N_sf"/>
</dbReference>
<dbReference type="InterPro" id="IPR009000">
    <property type="entry name" value="Transl_B-barrel_sf"/>
</dbReference>
<dbReference type="NCBIfam" id="TIGR02273">
    <property type="entry name" value="16S_RimM"/>
    <property type="match status" value="1"/>
</dbReference>
<dbReference type="PANTHER" id="PTHR33692">
    <property type="entry name" value="RIBOSOME MATURATION FACTOR RIMM"/>
    <property type="match status" value="1"/>
</dbReference>
<dbReference type="PANTHER" id="PTHR33692:SF1">
    <property type="entry name" value="RIBOSOME MATURATION FACTOR RIMM"/>
    <property type="match status" value="1"/>
</dbReference>
<dbReference type="Pfam" id="PF05239">
    <property type="entry name" value="PRC"/>
    <property type="match status" value="1"/>
</dbReference>
<dbReference type="Pfam" id="PF01782">
    <property type="entry name" value="RimM"/>
    <property type="match status" value="1"/>
</dbReference>
<dbReference type="SUPFAM" id="SSF50346">
    <property type="entry name" value="PRC-barrel domain"/>
    <property type="match status" value="1"/>
</dbReference>
<dbReference type="SUPFAM" id="SSF50447">
    <property type="entry name" value="Translation proteins"/>
    <property type="match status" value="1"/>
</dbReference>
<sequence>MTKENYFKVGTIVNTHGIRGEVKIMAITDFAADRFKKGAALQIETKQGFVPVTVQSSRLHKNMWLVLFEGVTNINEIEKYKTNDIYVYGEAREALGDDEYYYDEIIDSRVVSLSGEAIGVVSEIMTTGANDVWVVKRPGQSDALIPMIDDVVKSVDVANKLITIDVLEGLLD</sequence>
<feature type="chain" id="PRO_0000351769" description="Ribosome maturation factor RimM">
    <location>
        <begin position="1"/>
        <end position="172"/>
    </location>
</feature>
<feature type="domain" description="PRC barrel" evidence="1">
    <location>
        <begin position="97"/>
        <end position="170"/>
    </location>
</feature>
<accession>B1MZT5</accession>
<evidence type="ECO:0000255" key="1">
    <source>
        <dbReference type="HAMAP-Rule" id="MF_00014"/>
    </source>
</evidence>
<proteinExistence type="inferred from homology"/>
<organism>
    <name type="scientific">Leuconostoc citreum (strain KM20)</name>
    <dbReference type="NCBI Taxonomy" id="349519"/>
    <lineage>
        <taxon>Bacteria</taxon>
        <taxon>Bacillati</taxon>
        <taxon>Bacillota</taxon>
        <taxon>Bacilli</taxon>
        <taxon>Lactobacillales</taxon>
        <taxon>Lactobacillaceae</taxon>
        <taxon>Leuconostoc</taxon>
    </lineage>
</organism>
<gene>
    <name evidence="1" type="primary">rimM</name>
    <name type="ordered locus">LCK_01210</name>
</gene>
<comment type="function">
    <text evidence="1">An accessory protein needed during the final step in the assembly of 30S ribosomal subunit, possibly for assembly of the head region. Essential for efficient processing of 16S rRNA. May be needed both before and after RbfA during the maturation of 16S rRNA. It has affinity for free ribosomal 30S subunits but not for 70S ribosomes.</text>
</comment>
<comment type="subunit">
    <text evidence="1">Binds ribosomal protein uS19.</text>
</comment>
<comment type="subcellular location">
    <subcellularLocation>
        <location evidence="1">Cytoplasm</location>
    </subcellularLocation>
</comment>
<comment type="domain">
    <text evidence="1">The PRC barrel domain binds ribosomal protein uS19.</text>
</comment>
<comment type="similarity">
    <text evidence="1">Belongs to the RimM family.</text>
</comment>
<reference key="1">
    <citation type="journal article" date="2008" name="J. Bacteriol.">
        <title>Complete genome sequence of Leuconostoc citreum KM20.</title>
        <authorList>
            <person name="Kim J.F."/>
            <person name="Jeong H."/>
            <person name="Lee J.-S."/>
            <person name="Choi S.-H."/>
            <person name="Ha M."/>
            <person name="Hur C.-G."/>
            <person name="Kim J.-S."/>
            <person name="Lee S."/>
            <person name="Park H.-S."/>
            <person name="Park Y.-H."/>
            <person name="Oh T.K."/>
        </authorList>
    </citation>
    <scope>NUCLEOTIDE SEQUENCE [LARGE SCALE GENOMIC DNA]</scope>
    <source>
        <strain>KM20</strain>
    </source>
</reference>